<protein>
    <recommendedName>
        <fullName>Nudix hydrolase 9</fullName>
        <shortName>AtNUDT9</shortName>
        <ecNumber>3.6.1.-</ecNumber>
    </recommendedName>
</protein>
<proteinExistence type="evidence at transcript level"/>
<sequence length="311" mass="34717">MAKLAEEMNPEGSRYQLLLSCPSGLSPSQVSVDFSKSHDRIPRQDPGLEDSISQVWEQRSQGNSSLFNGQKFRYGGYCLDDDDGSTNEVPHVCLRLGLTDYRTFVGTNLSSLWEKFLVTSEDDSVRCRHTSSPLGNGAVIETSDKKIIVLRRSNNVGEFPGHYVFPGGHPEPTAVGIDYHQLENNVQTGEVLNKKVTQEMFDSIICEVVEETGIPASSLSSPLFIGISRRELNVRPAMFFYLKCSHHSDDIQRLYSSAEDGFESTQLHTVSLDELKMMTSRMPGCHHGGFALYELMLQRLKNTKETSLIAT</sequence>
<keyword id="KW-0378">Hydrolase</keyword>
<keyword id="KW-0460">Magnesium</keyword>
<keyword id="KW-0464">Manganese</keyword>
<keyword id="KW-0479">Metal-binding</keyword>
<keyword id="KW-1185">Reference proteome</keyword>
<dbReference type="EC" id="3.6.1.-"/>
<dbReference type="EMBL" id="AL355775">
    <property type="protein sequence ID" value="CAB90947.1"/>
    <property type="status" value="ALT_SEQ"/>
    <property type="molecule type" value="Genomic_DNA"/>
</dbReference>
<dbReference type="EMBL" id="CP002686">
    <property type="protein sequence ID" value="AEE78127.1"/>
    <property type="molecule type" value="Genomic_DNA"/>
</dbReference>
<dbReference type="EMBL" id="AY070078">
    <property type="protein sequence ID" value="AAL49773.1"/>
    <property type="molecule type" value="mRNA"/>
</dbReference>
<dbReference type="EMBL" id="AY117353">
    <property type="protein sequence ID" value="AAM51428.1"/>
    <property type="molecule type" value="mRNA"/>
</dbReference>
<dbReference type="EMBL" id="AK118191">
    <property type="protein sequence ID" value="BAC42814.1"/>
    <property type="status" value="ALT_INIT"/>
    <property type="molecule type" value="mRNA"/>
</dbReference>
<dbReference type="PIR" id="T49261">
    <property type="entry name" value="T49261"/>
</dbReference>
<dbReference type="RefSeq" id="NP_190206.2">
    <property type="nucleotide sequence ID" value="NM_114489.5"/>
</dbReference>
<dbReference type="SMR" id="Q8VYR2"/>
<dbReference type="FunCoup" id="Q8VYR2">
    <property type="interactions" value="527"/>
</dbReference>
<dbReference type="STRING" id="3702.Q8VYR2"/>
<dbReference type="PaxDb" id="3702-AT3G46200.1"/>
<dbReference type="ProteomicsDB" id="250555"/>
<dbReference type="DNASU" id="823765"/>
<dbReference type="EnsemblPlants" id="AT3G46200.1">
    <property type="protein sequence ID" value="AT3G46200.1"/>
    <property type="gene ID" value="AT3G46200"/>
</dbReference>
<dbReference type="GeneID" id="823765"/>
<dbReference type="Gramene" id="AT3G46200.1">
    <property type="protein sequence ID" value="AT3G46200.1"/>
    <property type="gene ID" value="AT3G46200"/>
</dbReference>
<dbReference type="KEGG" id="ath:AT3G46200"/>
<dbReference type="Araport" id="AT3G46200"/>
<dbReference type="TAIR" id="AT3G46200">
    <property type="gene designation" value="NUDT9"/>
</dbReference>
<dbReference type="eggNOG" id="ENOG502QRSW">
    <property type="taxonomic scope" value="Eukaryota"/>
</dbReference>
<dbReference type="HOGENOM" id="CLU_061819_0_0_1"/>
<dbReference type="InParanoid" id="Q8VYR2"/>
<dbReference type="OMA" id="LCTDDGQ"/>
<dbReference type="PhylomeDB" id="Q8VYR2"/>
<dbReference type="PRO" id="PR:Q8VYR2"/>
<dbReference type="Proteomes" id="UP000006548">
    <property type="component" value="Chromosome 3"/>
</dbReference>
<dbReference type="ExpressionAtlas" id="Q8VYR2">
    <property type="expression patterns" value="baseline and differential"/>
</dbReference>
<dbReference type="GO" id="GO:0005829">
    <property type="term" value="C:cytosol"/>
    <property type="evidence" value="ECO:0000255"/>
    <property type="project" value="TAIR"/>
</dbReference>
<dbReference type="GO" id="GO:0052751">
    <property type="term" value="F:GDP-mannose hydrolase activity"/>
    <property type="evidence" value="ECO:0000314"/>
    <property type="project" value="TAIR"/>
</dbReference>
<dbReference type="GO" id="GO:0046872">
    <property type="term" value="F:metal ion binding"/>
    <property type="evidence" value="ECO:0007669"/>
    <property type="project" value="UniProtKB-KW"/>
</dbReference>
<dbReference type="GO" id="GO:0071242">
    <property type="term" value="P:cellular response to ammonium ion"/>
    <property type="evidence" value="ECO:0000315"/>
    <property type="project" value="TAIR"/>
</dbReference>
<dbReference type="FunFam" id="3.90.79.10:FF:000062">
    <property type="entry name" value="Nudix hydrolase 9"/>
    <property type="match status" value="1"/>
</dbReference>
<dbReference type="Gene3D" id="3.90.79.10">
    <property type="entry name" value="Nucleoside Triphosphate Pyrophosphohydrolase"/>
    <property type="match status" value="1"/>
</dbReference>
<dbReference type="InterPro" id="IPR015797">
    <property type="entry name" value="NUDIX_hydrolase-like_dom_sf"/>
</dbReference>
<dbReference type="InterPro" id="IPR000086">
    <property type="entry name" value="NUDIX_hydrolase_dom"/>
</dbReference>
<dbReference type="InterPro" id="IPR055295">
    <property type="entry name" value="NUDT22/NUDT9-like"/>
</dbReference>
<dbReference type="PANTHER" id="PTHR31835">
    <property type="entry name" value="URIDINE DIPHOSPHATE GLUCOSE PYROPHOSPHATASE"/>
    <property type="match status" value="1"/>
</dbReference>
<dbReference type="PANTHER" id="PTHR31835:SF1">
    <property type="entry name" value="URIDINE DIPHOSPHATE GLUCOSE PYROPHOSPHATASE NUDT22"/>
    <property type="match status" value="1"/>
</dbReference>
<dbReference type="SUPFAM" id="SSF55811">
    <property type="entry name" value="Nudix"/>
    <property type="match status" value="1"/>
</dbReference>
<dbReference type="PROSITE" id="PS51462">
    <property type="entry name" value="NUDIX"/>
    <property type="match status" value="1"/>
</dbReference>
<reference key="1">
    <citation type="journal article" date="2000" name="Nature">
        <title>Sequence and analysis of chromosome 3 of the plant Arabidopsis thaliana.</title>
        <authorList>
            <person name="Salanoubat M."/>
            <person name="Lemcke K."/>
            <person name="Rieger M."/>
            <person name="Ansorge W."/>
            <person name="Unseld M."/>
            <person name="Fartmann B."/>
            <person name="Valle G."/>
            <person name="Bloecker H."/>
            <person name="Perez-Alonso M."/>
            <person name="Obermaier B."/>
            <person name="Delseny M."/>
            <person name="Boutry M."/>
            <person name="Grivell L.A."/>
            <person name="Mache R."/>
            <person name="Puigdomenech P."/>
            <person name="De Simone V."/>
            <person name="Choisne N."/>
            <person name="Artiguenave F."/>
            <person name="Robert C."/>
            <person name="Brottier P."/>
            <person name="Wincker P."/>
            <person name="Cattolico L."/>
            <person name="Weissenbach J."/>
            <person name="Saurin W."/>
            <person name="Quetier F."/>
            <person name="Schaefer M."/>
            <person name="Mueller-Auer S."/>
            <person name="Gabel C."/>
            <person name="Fuchs M."/>
            <person name="Benes V."/>
            <person name="Wurmbach E."/>
            <person name="Drzonek H."/>
            <person name="Erfle H."/>
            <person name="Jordan N."/>
            <person name="Bangert S."/>
            <person name="Wiedelmann R."/>
            <person name="Kranz H."/>
            <person name="Voss H."/>
            <person name="Holland R."/>
            <person name="Brandt P."/>
            <person name="Nyakatura G."/>
            <person name="Vezzi A."/>
            <person name="D'Angelo M."/>
            <person name="Pallavicini A."/>
            <person name="Toppo S."/>
            <person name="Simionati B."/>
            <person name="Conrad A."/>
            <person name="Hornischer K."/>
            <person name="Kauer G."/>
            <person name="Loehnert T.-H."/>
            <person name="Nordsiek G."/>
            <person name="Reichelt J."/>
            <person name="Scharfe M."/>
            <person name="Schoen O."/>
            <person name="Bargues M."/>
            <person name="Terol J."/>
            <person name="Climent J."/>
            <person name="Navarro P."/>
            <person name="Collado C."/>
            <person name="Perez-Perez A."/>
            <person name="Ottenwaelder B."/>
            <person name="Duchemin D."/>
            <person name="Cooke R."/>
            <person name="Laudie M."/>
            <person name="Berger-Llauro C."/>
            <person name="Purnelle B."/>
            <person name="Masuy D."/>
            <person name="de Haan M."/>
            <person name="Maarse A.C."/>
            <person name="Alcaraz J.-P."/>
            <person name="Cottet A."/>
            <person name="Casacuberta E."/>
            <person name="Monfort A."/>
            <person name="Argiriou A."/>
            <person name="Flores M."/>
            <person name="Liguori R."/>
            <person name="Vitale D."/>
            <person name="Mannhaupt G."/>
            <person name="Haase D."/>
            <person name="Schoof H."/>
            <person name="Rudd S."/>
            <person name="Zaccaria P."/>
            <person name="Mewes H.-W."/>
            <person name="Mayer K.F.X."/>
            <person name="Kaul S."/>
            <person name="Town C.D."/>
            <person name="Koo H.L."/>
            <person name="Tallon L.J."/>
            <person name="Jenkins J."/>
            <person name="Rooney T."/>
            <person name="Rizzo M."/>
            <person name="Walts A."/>
            <person name="Utterback T."/>
            <person name="Fujii C.Y."/>
            <person name="Shea T.P."/>
            <person name="Creasy T.H."/>
            <person name="Haas B."/>
            <person name="Maiti R."/>
            <person name="Wu D."/>
            <person name="Peterson J."/>
            <person name="Van Aken S."/>
            <person name="Pai G."/>
            <person name="Militscher J."/>
            <person name="Sellers P."/>
            <person name="Gill J.E."/>
            <person name="Feldblyum T.V."/>
            <person name="Preuss D."/>
            <person name="Lin X."/>
            <person name="Nierman W.C."/>
            <person name="Salzberg S.L."/>
            <person name="White O."/>
            <person name="Venter J.C."/>
            <person name="Fraser C.M."/>
            <person name="Kaneko T."/>
            <person name="Nakamura Y."/>
            <person name="Sato S."/>
            <person name="Kato T."/>
            <person name="Asamizu E."/>
            <person name="Sasamoto S."/>
            <person name="Kimura T."/>
            <person name="Idesawa K."/>
            <person name="Kawashima K."/>
            <person name="Kishida Y."/>
            <person name="Kiyokawa C."/>
            <person name="Kohara M."/>
            <person name="Matsumoto M."/>
            <person name="Matsuno A."/>
            <person name="Muraki A."/>
            <person name="Nakayama S."/>
            <person name="Nakazaki N."/>
            <person name="Shinpo S."/>
            <person name="Takeuchi C."/>
            <person name="Wada T."/>
            <person name="Watanabe A."/>
            <person name="Yamada M."/>
            <person name="Yasuda M."/>
            <person name="Tabata S."/>
        </authorList>
    </citation>
    <scope>NUCLEOTIDE SEQUENCE [LARGE SCALE GENOMIC DNA]</scope>
    <source>
        <strain>cv. Columbia</strain>
    </source>
</reference>
<reference key="2">
    <citation type="journal article" date="2017" name="Plant J.">
        <title>Araport11: a complete reannotation of the Arabidopsis thaliana reference genome.</title>
        <authorList>
            <person name="Cheng C.Y."/>
            <person name="Krishnakumar V."/>
            <person name="Chan A.P."/>
            <person name="Thibaud-Nissen F."/>
            <person name="Schobel S."/>
            <person name="Town C.D."/>
        </authorList>
    </citation>
    <scope>GENOME REANNOTATION</scope>
    <source>
        <strain>cv. Columbia</strain>
    </source>
</reference>
<reference key="3">
    <citation type="journal article" date="2003" name="Science">
        <title>Empirical analysis of transcriptional activity in the Arabidopsis genome.</title>
        <authorList>
            <person name="Yamada K."/>
            <person name="Lim J."/>
            <person name="Dale J.M."/>
            <person name="Chen H."/>
            <person name="Shinn P."/>
            <person name="Palm C.J."/>
            <person name="Southwick A.M."/>
            <person name="Wu H.C."/>
            <person name="Kim C.J."/>
            <person name="Nguyen M."/>
            <person name="Pham P.K."/>
            <person name="Cheuk R.F."/>
            <person name="Karlin-Newmann G."/>
            <person name="Liu S.X."/>
            <person name="Lam B."/>
            <person name="Sakano H."/>
            <person name="Wu T."/>
            <person name="Yu G."/>
            <person name="Miranda M."/>
            <person name="Quach H.L."/>
            <person name="Tripp M."/>
            <person name="Chang C.H."/>
            <person name="Lee J.M."/>
            <person name="Toriumi M.J."/>
            <person name="Chan M.M."/>
            <person name="Tang C.C."/>
            <person name="Onodera C.S."/>
            <person name="Deng J.M."/>
            <person name="Akiyama K."/>
            <person name="Ansari Y."/>
            <person name="Arakawa T."/>
            <person name="Banh J."/>
            <person name="Banno F."/>
            <person name="Bowser L."/>
            <person name="Brooks S.Y."/>
            <person name="Carninci P."/>
            <person name="Chao Q."/>
            <person name="Choy N."/>
            <person name="Enju A."/>
            <person name="Goldsmith A.D."/>
            <person name="Gurjal M."/>
            <person name="Hansen N.F."/>
            <person name="Hayashizaki Y."/>
            <person name="Johnson-Hopson C."/>
            <person name="Hsuan V.W."/>
            <person name="Iida K."/>
            <person name="Karnes M."/>
            <person name="Khan S."/>
            <person name="Koesema E."/>
            <person name="Ishida J."/>
            <person name="Jiang P.X."/>
            <person name="Jones T."/>
            <person name="Kawai J."/>
            <person name="Kamiya A."/>
            <person name="Meyers C."/>
            <person name="Nakajima M."/>
            <person name="Narusaka M."/>
            <person name="Seki M."/>
            <person name="Sakurai T."/>
            <person name="Satou M."/>
            <person name="Tamse R."/>
            <person name="Vaysberg M."/>
            <person name="Wallender E.K."/>
            <person name="Wong C."/>
            <person name="Yamamura Y."/>
            <person name="Yuan S."/>
            <person name="Shinozaki K."/>
            <person name="Davis R.W."/>
            <person name="Theologis A."/>
            <person name="Ecker J.R."/>
        </authorList>
    </citation>
    <scope>NUCLEOTIDE SEQUENCE [LARGE SCALE MRNA]</scope>
    <source>
        <strain>cv. Columbia</strain>
    </source>
</reference>
<reference key="4">
    <citation type="journal article" date="2002" name="Science">
        <title>Functional annotation of a full-length Arabidopsis cDNA collection.</title>
        <authorList>
            <person name="Seki M."/>
            <person name="Narusaka M."/>
            <person name="Kamiya A."/>
            <person name="Ishida J."/>
            <person name="Satou M."/>
            <person name="Sakurai T."/>
            <person name="Nakajima M."/>
            <person name="Enju A."/>
            <person name="Akiyama K."/>
            <person name="Oono Y."/>
            <person name="Muramatsu M."/>
            <person name="Hayashizaki Y."/>
            <person name="Kawai J."/>
            <person name="Carninci P."/>
            <person name="Itoh M."/>
            <person name="Ishii Y."/>
            <person name="Arakawa T."/>
            <person name="Shibata K."/>
            <person name="Shinagawa A."/>
            <person name="Shinozaki K."/>
        </authorList>
    </citation>
    <scope>NUCLEOTIDE SEQUENCE [LARGE SCALE MRNA] OF 5-311</scope>
    <source>
        <strain>cv. Columbia</strain>
    </source>
</reference>
<reference key="5">
    <citation type="journal article" date="2005" name="J. Biol. Chem.">
        <title>Comprehensive analysis of cytosolic nudix hydrolases in Arabidopsis thaliana.</title>
        <authorList>
            <person name="Ogawa T."/>
            <person name="Ueda Y."/>
            <person name="Yoshimura K."/>
            <person name="Shigeoka S."/>
        </authorList>
    </citation>
    <scope>TISSUE SPECIFICITY</scope>
</reference>
<name>NUDT9_ARATH</name>
<accession>Q8VYR2</accession>
<accession>Q8GXK4</accession>
<accession>Q9LX75</accession>
<organism>
    <name type="scientific">Arabidopsis thaliana</name>
    <name type="common">Mouse-ear cress</name>
    <dbReference type="NCBI Taxonomy" id="3702"/>
    <lineage>
        <taxon>Eukaryota</taxon>
        <taxon>Viridiplantae</taxon>
        <taxon>Streptophyta</taxon>
        <taxon>Embryophyta</taxon>
        <taxon>Tracheophyta</taxon>
        <taxon>Spermatophyta</taxon>
        <taxon>Magnoliopsida</taxon>
        <taxon>eudicotyledons</taxon>
        <taxon>Gunneridae</taxon>
        <taxon>Pentapetalae</taxon>
        <taxon>rosids</taxon>
        <taxon>malvids</taxon>
        <taxon>Brassicales</taxon>
        <taxon>Brassicaceae</taxon>
        <taxon>Camelineae</taxon>
        <taxon>Arabidopsis</taxon>
    </lineage>
</organism>
<feature type="chain" id="PRO_0000057129" description="Nudix hydrolase 9">
    <location>
        <begin position="1"/>
        <end position="311"/>
    </location>
</feature>
<feature type="domain" description="Nudix hydrolase" evidence="2">
    <location>
        <begin position="131"/>
        <end position="298"/>
    </location>
</feature>
<feature type="short sequence motif" description="Nudix box">
    <location>
        <begin position="192"/>
        <end position="213"/>
    </location>
</feature>
<feature type="binding site" evidence="1">
    <location>
        <position position="207"/>
    </location>
    <ligand>
        <name>Mg(2+)</name>
        <dbReference type="ChEBI" id="CHEBI:18420"/>
    </ligand>
</feature>
<feature type="binding site" evidence="1">
    <location>
        <position position="211"/>
    </location>
    <ligand>
        <name>Mg(2+)</name>
        <dbReference type="ChEBI" id="CHEBI:18420"/>
    </ligand>
</feature>
<comment type="function">
    <text evidence="1">Probably mediates the hydrolysis of some nucleoside diphosphate derivatives.</text>
</comment>
<comment type="cofactor">
    <cofactor evidence="1">
        <name>Mg(2+)</name>
        <dbReference type="ChEBI" id="CHEBI:18420"/>
    </cofactor>
    <cofactor evidence="1">
        <name>Mn(2+)</name>
        <dbReference type="ChEBI" id="CHEBI:29035"/>
    </cofactor>
</comment>
<comment type="tissue specificity">
    <text evidence="3">Expressed in roots, stems and leaves.</text>
</comment>
<comment type="similarity">
    <text evidence="4">Belongs to the Nudix hydrolase family.</text>
</comment>
<comment type="sequence caution" evidence="4">
    <conflict type="erroneous initiation">
        <sequence resource="EMBL-CDS" id="BAC42814"/>
    </conflict>
</comment>
<comment type="sequence caution" evidence="4">
    <conflict type="erroneous gene model prediction">
        <sequence resource="EMBL-CDS" id="CAB90947"/>
    </conflict>
</comment>
<evidence type="ECO:0000250" key="1"/>
<evidence type="ECO:0000255" key="2">
    <source>
        <dbReference type="PROSITE-ProRule" id="PRU00794"/>
    </source>
</evidence>
<evidence type="ECO:0000269" key="3">
    <source>
    </source>
</evidence>
<evidence type="ECO:0000305" key="4"/>
<gene>
    <name type="primary">NUDT9</name>
    <name type="synonym">NUDX9</name>
    <name type="ordered locus">At3g46200</name>
    <name type="ORF">F12M12.170</name>
</gene>